<organism>
    <name type="scientific">Saccharomyces cerevisiae (strain ATCC 204508 / S288c)</name>
    <name type="common">Baker's yeast</name>
    <dbReference type="NCBI Taxonomy" id="559292"/>
    <lineage>
        <taxon>Eukaryota</taxon>
        <taxon>Fungi</taxon>
        <taxon>Dikarya</taxon>
        <taxon>Ascomycota</taxon>
        <taxon>Saccharomycotina</taxon>
        <taxon>Saccharomycetes</taxon>
        <taxon>Saccharomycetales</taxon>
        <taxon>Saccharomycetaceae</taxon>
        <taxon>Saccharomyces</taxon>
    </lineage>
</organism>
<sequence length="817" mass="91032">MDLKTSYKGISLNPIYAGSSAVATVSENGKILATPVLDEINIIDLTPGSRKILHKISNEDEQEITALKLTPDGQYLTYVSQAQLLKIFHLKTGKVVRSMKISSPSYILDADSTSTLLAVGGTDGSIIVVDIENGYITHSFKGHGGTISSLKFYGQLNSKIWLLASGDTNGMVKVWDLVKRKCLHTLQEHTSAVRGLDIIEVPDNDEPSLNLLSGGRDDIINLWDFNMKKKCKLLKTLPVNQQVESCGFLKDGDGKRIIYTAGGDAIFQLIDSESGSVLKRTNKPIEELFIIGVLPILSNSQMFLVLSDQTLQLINVEEDLKNDEDTIQVTSSIAGNHGIIADMRYVGPELNKLALATNSPSLRIIPVPDLSGPEASLPLDVEIYEGHEDLLNSLDATEDGLWIATASKDNTAIVWRYNENSCKFDIYAKYIGHSAAVTAVGLPNIVSKGYPEFLLTASNDLTIKKWIIPKPTASMDVQIIKVSEYTRHAHEKDINALSVSPNDSIFATASYDKTCKIWNLENGELEATLANHKRGLWDVSFCQYDKLLATSSGDKTVKIWSLDTFSVMKTLEGHTNAVQRCSFINKQKQLISCGADGLIKIWDCSSGECLKTLDGHNNRLWALSTMNDGDMIVSADADGVFQFWKDCTEQEIEEEQEKAKLQVEQEQSLQNYMSKGDWTNAFLLAMTLDHPMRLFNVLKRALGESRSRQDTEEGKIEVIFNEELDQAISILNDEQLILLMKRCRDWNTNAKTHTIAQRTIRCILMHHNIAKLSEIPGMVKIVDAIIPYTQRHFTRVDNLVEQSYILDYALVEMDKLF</sequence>
<evidence type="ECO:0000269" key="1">
    <source>
    </source>
</evidence>
<evidence type="ECO:0000269" key="2">
    <source>
    </source>
</evidence>
<reference key="1">
    <citation type="journal article" date="1997" name="Nature">
        <title>The nucleotide sequence of Saccharomyces cerevisiae chromosome XII.</title>
        <authorList>
            <person name="Johnston M."/>
            <person name="Hillier L.W."/>
            <person name="Riles L."/>
            <person name="Albermann K."/>
            <person name="Andre B."/>
            <person name="Ansorge W."/>
            <person name="Benes V."/>
            <person name="Brueckner M."/>
            <person name="Delius H."/>
            <person name="Dubois E."/>
            <person name="Duesterhoeft A."/>
            <person name="Entian K.-D."/>
            <person name="Floeth M."/>
            <person name="Goffeau A."/>
            <person name="Hebling U."/>
            <person name="Heumann K."/>
            <person name="Heuss-Neitzel D."/>
            <person name="Hilbert H."/>
            <person name="Hilger F."/>
            <person name="Kleine K."/>
            <person name="Koetter P."/>
            <person name="Louis E.J."/>
            <person name="Messenguy F."/>
            <person name="Mewes H.-W."/>
            <person name="Miosga T."/>
            <person name="Moestl D."/>
            <person name="Mueller-Auer S."/>
            <person name="Nentwich U."/>
            <person name="Obermaier B."/>
            <person name="Piravandi E."/>
            <person name="Pohl T.M."/>
            <person name="Portetelle D."/>
            <person name="Purnelle B."/>
            <person name="Rechmann S."/>
            <person name="Rieger M."/>
            <person name="Rinke M."/>
            <person name="Rose M."/>
            <person name="Scharfe M."/>
            <person name="Scherens B."/>
            <person name="Scholler P."/>
            <person name="Schwager C."/>
            <person name="Schwarz S."/>
            <person name="Underwood A.P."/>
            <person name="Urrestarazu L.A."/>
            <person name="Vandenbol M."/>
            <person name="Verhasselt P."/>
            <person name="Vierendeels F."/>
            <person name="Voet M."/>
            <person name="Volckaert G."/>
            <person name="Voss H."/>
            <person name="Wambutt R."/>
            <person name="Wedler E."/>
            <person name="Wedler H."/>
            <person name="Zimmermann F.K."/>
            <person name="Zollner A."/>
            <person name="Hani J."/>
            <person name="Hoheisel J.D."/>
        </authorList>
    </citation>
    <scope>NUCLEOTIDE SEQUENCE [LARGE SCALE GENOMIC DNA]</scope>
    <source>
        <strain>ATCC 204508 / S288c</strain>
    </source>
</reference>
<reference key="2">
    <citation type="journal article" date="2014" name="G3 (Bethesda)">
        <title>The reference genome sequence of Saccharomyces cerevisiae: Then and now.</title>
        <authorList>
            <person name="Engel S.R."/>
            <person name="Dietrich F.S."/>
            <person name="Fisk D.G."/>
            <person name="Binkley G."/>
            <person name="Balakrishnan R."/>
            <person name="Costanzo M.C."/>
            <person name="Dwight S.S."/>
            <person name="Hitz B.C."/>
            <person name="Karra K."/>
            <person name="Nash R.S."/>
            <person name="Weng S."/>
            <person name="Wong E.D."/>
            <person name="Lloyd P."/>
            <person name="Skrzypek M.S."/>
            <person name="Miyasato S.R."/>
            <person name="Simison M."/>
            <person name="Cherry J.M."/>
        </authorList>
    </citation>
    <scope>GENOME REANNOTATION</scope>
    <source>
        <strain>ATCC 204508 / S288c</strain>
    </source>
</reference>
<reference key="3">
    <citation type="journal article" date="2002" name="Nature">
        <title>A large nucleolar U3 ribonucleoprotein required for 18S ribosomal RNA biogenesis.</title>
        <authorList>
            <person name="Dragon F."/>
            <person name="Gallagher J.E.G."/>
            <person name="Compagnone-Post P.A."/>
            <person name="Mitchell B.M."/>
            <person name="Porwancher K.A."/>
            <person name="Wehner K.A."/>
            <person name="Wormsley S."/>
            <person name="Settlage R.E."/>
            <person name="Shabanowitz J."/>
            <person name="Osheim Y."/>
            <person name="Beyer A.L."/>
            <person name="Hunt D.F."/>
            <person name="Baserga S.J."/>
        </authorList>
    </citation>
    <scope>FUNCTION</scope>
    <scope>INTERACTION WITH MPP10 AND SNORNA U3</scope>
    <scope>IDENTIFICATION IN SSU PROCESSOME BY MASS SPECTROMETRY</scope>
    <scope>SUBCELLULAR LOCATION</scope>
</reference>
<reference key="4">
    <citation type="journal article" date="2003" name="Nature">
        <title>Global analysis of protein expression in yeast.</title>
        <authorList>
            <person name="Ghaemmaghami S."/>
            <person name="Huh W.-K."/>
            <person name="Bower K."/>
            <person name="Howson R.W."/>
            <person name="Belle A."/>
            <person name="Dephoure N."/>
            <person name="O'Shea E.K."/>
            <person name="Weissman J.S."/>
        </authorList>
    </citation>
    <scope>LEVEL OF PROTEIN EXPRESSION [LARGE SCALE ANALYSIS]</scope>
</reference>
<name>UTP13_YEAST</name>
<keyword id="KW-0002">3D-structure</keyword>
<keyword id="KW-0539">Nucleus</keyword>
<keyword id="KW-1185">Reference proteome</keyword>
<keyword id="KW-0677">Repeat</keyword>
<keyword id="KW-0687">Ribonucleoprotein</keyword>
<keyword id="KW-0690">Ribosome biogenesis</keyword>
<keyword id="KW-0698">rRNA processing</keyword>
<keyword id="KW-0853">WD repeat</keyword>
<comment type="function">
    <text evidence="1">Involved in nucleolar processing of pre-18S ribosomal RNA.</text>
</comment>
<comment type="subunit">
    <text evidence="1">Interacts with snoRNA U3. Interacts with MPP10. Component of the ribosomal small subunit (SSU) processome composed of at least 40 protein subunits and snoRNA U3.</text>
</comment>
<comment type="interaction">
    <interactant intactId="EBI-34702">
        <id>Q05946</id>
    </interactant>
    <interactant intactId="EBI-5896">
        <id>Q12220</id>
        <label>DIP2</label>
    </interactant>
    <organismsDiffer>false</organismsDiffer>
    <experiments>8</experiments>
</comment>
<comment type="interaction">
    <interactant intactId="EBI-34702">
        <id>Q05946</id>
    </interactant>
    <interactant intactId="EBI-22119">
        <id>Q02354</id>
        <label>UTP6</label>
    </interactant>
    <organismsDiffer>false</organismsDiffer>
    <experiments>5</experiments>
</comment>
<comment type="subcellular location">
    <subcellularLocation>
        <location evidence="1">Nucleus</location>
        <location evidence="1">Nucleolus</location>
    </subcellularLocation>
</comment>
<comment type="miscellaneous">
    <text evidence="2">Present with 8070 molecules/cell in log phase SD medium.</text>
</comment>
<gene>
    <name type="primary">UTP13</name>
    <name type="ordered locus">YLR222C</name>
</gene>
<accession>Q05946</accession>
<accession>D6VYM2</accession>
<dbReference type="EMBL" id="U19027">
    <property type="protein sequence ID" value="AAB67411.1"/>
    <property type="molecule type" value="Genomic_DNA"/>
</dbReference>
<dbReference type="EMBL" id="BK006945">
    <property type="protein sequence ID" value="DAA09538.1"/>
    <property type="molecule type" value="Genomic_DNA"/>
</dbReference>
<dbReference type="PIR" id="S51445">
    <property type="entry name" value="S51445"/>
</dbReference>
<dbReference type="RefSeq" id="NP_013323.1">
    <property type="nucleotide sequence ID" value="NM_001182109.1"/>
</dbReference>
<dbReference type="PDB" id="5WLC">
    <property type="method" value="EM"/>
    <property type="resolution" value="3.80 A"/>
    <property type="chains" value="LR=648-817"/>
</dbReference>
<dbReference type="PDB" id="5WYJ">
    <property type="method" value="EM"/>
    <property type="resolution" value="8.70 A"/>
    <property type="chains" value="BC=1-817"/>
</dbReference>
<dbReference type="PDB" id="5WYK">
    <property type="method" value="EM"/>
    <property type="resolution" value="4.50 A"/>
    <property type="chains" value="BC=1-817"/>
</dbReference>
<dbReference type="PDB" id="6KE6">
    <property type="method" value="EM"/>
    <property type="resolution" value="3.40 A"/>
    <property type="chains" value="B3=1-817"/>
</dbReference>
<dbReference type="PDB" id="6LQP">
    <property type="method" value="EM"/>
    <property type="resolution" value="3.20 A"/>
    <property type="chains" value="B3=1-817"/>
</dbReference>
<dbReference type="PDB" id="6LQQ">
    <property type="method" value="EM"/>
    <property type="resolution" value="4.10 A"/>
    <property type="chains" value="B3=1-817"/>
</dbReference>
<dbReference type="PDB" id="6LQR">
    <property type="method" value="EM"/>
    <property type="resolution" value="8.60 A"/>
    <property type="chains" value="B3=1-817"/>
</dbReference>
<dbReference type="PDB" id="6LQS">
    <property type="method" value="EM"/>
    <property type="resolution" value="3.80 A"/>
    <property type="chains" value="B3=1-817"/>
</dbReference>
<dbReference type="PDB" id="6LQT">
    <property type="method" value="EM"/>
    <property type="resolution" value="4.90 A"/>
    <property type="chains" value="B3=1-817"/>
</dbReference>
<dbReference type="PDB" id="6LQU">
    <property type="method" value="EM"/>
    <property type="resolution" value="3.70 A"/>
    <property type="chains" value="B3=1-817"/>
</dbReference>
<dbReference type="PDB" id="6LQV">
    <property type="method" value="EM"/>
    <property type="resolution" value="4.80 A"/>
    <property type="chains" value="B3=1-817"/>
</dbReference>
<dbReference type="PDB" id="6ND4">
    <property type="method" value="EM"/>
    <property type="resolution" value="4.30 A"/>
    <property type="chains" value="R=648-817"/>
</dbReference>
<dbReference type="PDB" id="6ZQA">
    <property type="method" value="EM"/>
    <property type="resolution" value="4.40 A"/>
    <property type="chains" value="UM=1-817"/>
</dbReference>
<dbReference type="PDB" id="6ZQB">
    <property type="method" value="EM"/>
    <property type="resolution" value="3.90 A"/>
    <property type="chains" value="UM=1-817"/>
</dbReference>
<dbReference type="PDB" id="6ZQC">
    <property type="method" value="EM"/>
    <property type="resolution" value="3.80 A"/>
    <property type="chains" value="UM=1-817"/>
</dbReference>
<dbReference type="PDB" id="6ZQD">
    <property type="method" value="EM"/>
    <property type="resolution" value="3.80 A"/>
    <property type="chains" value="UM=1-817"/>
</dbReference>
<dbReference type="PDB" id="6ZQE">
    <property type="method" value="EM"/>
    <property type="resolution" value="7.10 A"/>
    <property type="chains" value="UM=1-817"/>
</dbReference>
<dbReference type="PDB" id="6ZQF">
    <property type="method" value="EM"/>
    <property type="resolution" value="4.90 A"/>
    <property type="chains" value="UM=1-817"/>
</dbReference>
<dbReference type="PDB" id="7AJT">
    <property type="method" value="EM"/>
    <property type="resolution" value="4.60 A"/>
    <property type="chains" value="UM=1-817"/>
</dbReference>
<dbReference type="PDB" id="7AJU">
    <property type="method" value="EM"/>
    <property type="resolution" value="3.80 A"/>
    <property type="chains" value="UM=1-817"/>
</dbReference>
<dbReference type="PDB" id="7D4I">
    <property type="method" value="EM"/>
    <property type="resolution" value="4.00 A"/>
    <property type="chains" value="B3=1-817"/>
</dbReference>
<dbReference type="PDB" id="7D5S">
    <property type="method" value="EM"/>
    <property type="resolution" value="4.60 A"/>
    <property type="chains" value="B3=1-817"/>
</dbReference>
<dbReference type="PDB" id="7D5T">
    <property type="method" value="EM"/>
    <property type="resolution" value="6.00 A"/>
    <property type="chains" value="B3=1-817"/>
</dbReference>
<dbReference type="PDB" id="7D63">
    <property type="method" value="EM"/>
    <property type="resolution" value="12.30 A"/>
    <property type="chains" value="B3=1-817"/>
</dbReference>
<dbReference type="PDB" id="7SUK">
    <property type="method" value="EM"/>
    <property type="resolution" value="3.99 A"/>
    <property type="chains" value="LR=7-817"/>
</dbReference>
<dbReference type="PDBsum" id="5WLC"/>
<dbReference type="PDBsum" id="5WYJ"/>
<dbReference type="PDBsum" id="5WYK"/>
<dbReference type="PDBsum" id="6KE6"/>
<dbReference type="PDBsum" id="6LQP"/>
<dbReference type="PDBsum" id="6LQQ"/>
<dbReference type="PDBsum" id="6LQR"/>
<dbReference type="PDBsum" id="6LQS"/>
<dbReference type="PDBsum" id="6LQT"/>
<dbReference type="PDBsum" id="6LQU"/>
<dbReference type="PDBsum" id="6LQV"/>
<dbReference type="PDBsum" id="6ND4"/>
<dbReference type="PDBsum" id="6ZQA"/>
<dbReference type="PDBsum" id="6ZQB"/>
<dbReference type="PDBsum" id="6ZQC"/>
<dbReference type="PDBsum" id="6ZQD"/>
<dbReference type="PDBsum" id="6ZQE"/>
<dbReference type="PDBsum" id="6ZQF"/>
<dbReference type="PDBsum" id="7AJT"/>
<dbReference type="PDBsum" id="7AJU"/>
<dbReference type="PDBsum" id="7D4I"/>
<dbReference type="PDBsum" id="7D5S"/>
<dbReference type="PDBsum" id="7D5T"/>
<dbReference type="PDBsum" id="7D63"/>
<dbReference type="PDBsum" id="7SUK"/>
<dbReference type="EMDB" id="EMD-0949"/>
<dbReference type="EMDB" id="EMD-0950"/>
<dbReference type="EMDB" id="EMD-0951"/>
<dbReference type="EMDB" id="EMD-0952"/>
<dbReference type="EMDB" id="EMD-0953"/>
<dbReference type="EMDB" id="EMD-0954"/>
<dbReference type="EMDB" id="EMD-0955"/>
<dbReference type="EMDB" id="EMD-11357"/>
<dbReference type="EMDB" id="EMD-11358"/>
<dbReference type="EMDB" id="EMD-11359"/>
<dbReference type="EMDB" id="EMD-11360"/>
<dbReference type="EMDB" id="EMD-11361"/>
<dbReference type="EMDB" id="EMD-11362"/>
<dbReference type="EMDB" id="EMD-11807"/>
<dbReference type="EMDB" id="EMD-11808"/>
<dbReference type="EMDB" id="EMD-25441"/>
<dbReference type="EMDB" id="EMD-30574"/>
<dbReference type="EMDB" id="EMD-30584"/>
<dbReference type="EMDB" id="EMD-30585"/>
<dbReference type="EMDB" id="EMD-30588"/>
<dbReference type="EMDB" id="EMD-6695"/>
<dbReference type="EMDB" id="EMD-6696"/>
<dbReference type="EMDB" id="EMD-8859"/>
<dbReference type="EMDB" id="EMD-9964"/>
<dbReference type="SMR" id="Q05946"/>
<dbReference type="BioGRID" id="31489">
    <property type="interactions" value="356"/>
</dbReference>
<dbReference type="ComplexPortal" id="CPX-1410">
    <property type="entry name" value="UTP-B complex"/>
</dbReference>
<dbReference type="DIP" id="DIP-4790N"/>
<dbReference type="FunCoup" id="Q05946">
    <property type="interactions" value="1294"/>
</dbReference>
<dbReference type="IntAct" id="Q05946">
    <property type="interactions" value="101"/>
</dbReference>
<dbReference type="MINT" id="Q05946"/>
<dbReference type="STRING" id="4932.YLR222C"/>
<dbReference type="GlyGen" id="Q05946">
    <property type="glycosylation" value="1 site"/>
</dbReference>
<dbReference type="iPTMnet" id="Q05946"/>
<dbReference type="PaxDb" id="4932-YLR222C"/>
<dbReference type="PeptideAtlas" id="Q05946"/>
<dbReference type="EnsemblFungi" id="YLR222C_mRNA">
    <property type="protein sequence ID" value="YLR222C"/>
    <property type="gene ID" value="YLR222C"/>
</dbReference>
<dbReference type="GeneID" id="850919"/>
<dbReference type="KEGG" id="sce:YLR222C"/>
<dbReference type="AGR" id="SGD:S000004212"/>
<dbReference type="SGD" id="S000004212">
    <property type="gene designation" value="UTP13"/>
</dbReference>
<dbReference type="VEuPathDB" id="FungiDB:YLR222C"/>
<dbReference type="eggNOG" id="KOG0319">
    <property type="taxonomic scope" value="Eukaryota"/>
</dbReference>
<dbReference type="GeneTree" id="ENSGT00940000157651"/>
<dbReference type="HOGENOM" id="CLU_009276_0_0_1"/>
<dbReference type="InParanoid" id="Q05946"/>
<dbReference type="OMA" id="PYVQRHF"/>
<dbReference type="OrthoDB" id="5414888at2759"/>
<dbReference type="BioCyc" id="YEAST:G3O-32336-MONOMER"/>
<dbReference type="Reactome" id="R-SCE-6791226">
    <property type="pathway name" value="Major pathway of rRNA processing in the nucleolus and cytosol"/>
</dbReference>
<dbReference type="BioGRID-ORCS" id="850919">
    <property type="hits" value="2 hits in 10 CRISPR screens"/>
</dbReference>
<dbReference type="CD-CODE" id="BDAE0F88">
    <property type="entry name" value="Nucleolus"/>
</dbReference>
<dbReference type="PRO" id="PR:Q05946"/>
<dbReference type="Proteomes" id="UP000002311">
    <property type="component" value="Chromosome XII"/>
</dbReference>
<dbReference type="RNAct" id="Q05946">
    <property type="molecule type" value="protein"/>
</dbReference>
<dbReference type="GO" id="GO:0030686">
    <property type="term" value="C:90S preribosome"/>
    <property type="evidence" value="ECO:0007005"/>
    <property type="project" value="SGD"/>
</dbReference>
<dbReference type="GO" id="GO:0005730">
    <property type="term" value="C:nucleolus"/>
    <property type="evidence" value="ECO:0000314"/>
    <property type="project" value="SGD"/>
</dbReference>
<dbReference type="GO" id="GO:0005654">
    <property type="term" value="C:nucleoplasm"/>
    <property type="evidence" value="ECO:0000304"/>
    <property type="project" value="Reactome"/>
</dbReference>
<dbReference type="GO" id="GO:0034388">
    <property type="term" value="C:Pwp2p-containing subcomplex of 90S preribosome"/>
    <property type="evidence" value="ECO:0000314"/>
    <property type="project" value="SGD"/>
</dbReference>
<dbReference type="GO" id="GO:0032040">
    <property type="term" value="C:small-subunit processome"/>
    <property type="evidence" value="ECO:0000314"/>
    <property type="project" value="SGD"/>
</dbReference>
<dbReference type="GO" id="GO:0034511">
    <property type="term" value="F:U3 snoRNA binding"/>
    <property type="evidence" value="ECO:0000314"/>
    <property type="project" value="SGD"/>
</dbReference>
<dbReference type="GO" id="GO:0000480">
    <property type="term" value="P:endonucleolytic cleavage in 5'-ETS of tricistronic rRNA transcript (SSU-rRNA, 5.8S rRNA, LSU-rRNA)"/>
    <property type="evidence" value="ECO:0000315"/>
    <property type="project" value="SGD"/>
</dbReference>
<dbReference type="GO" id="GO:0000447">
    <property type="term" value="P:endonucleolytic cleavage in ITS1 to separate SSU-rRNA from 5.8S rRNA and LSU-rRNA from tricistronic rRNA transcript (SSU-rRNA, 5.8S rRNA, LSU-rRNA)"/>
    <property type="evidence" value="ECO:0000315"/>
    <property type="project" value="SGD"/>
</dbReference>
<dbReference type="GO" id="GO:0000472">
    <property type="term" value="P:endonucleolytic cleavage to generate mature 5'-end of SSU-rRNA from (SSU-rRNA, 5.8S rRNA, LSU-rRNA)"/>
    <property type="evidence" value="ECO:0000315"/>
    <property type="project" value="SGD"/>
</dbReference>
<dbReference type="GO" id="GO:0030490">
    <property type="term" value="P:maturation of SSU-rRNA"/>
    <property type="evidence" value="ECO:0000303"/>
    <property type="project" value="ComplexPortal"/>
</dbReference>
<dbReference type="GO" id="GO:0000462">
    <property type="term" value="P:maturation of SSU-rRNA from tricistronic rRNA transcript (SSU-rRNA, 5.8S rRNA, LSU-rRNA)"/>
    <property type="evidence" value="ECO:0000315"/>
    <property type="project" value="SGD"/>
</dbReference>
<dbReference type="CDD" id="cd00200">
    <property type="entry name" value="WD40"/>
    <property type="match status" value="1"/>
</dbReference>
<dbReference type="FunFam" id="2.130.10.10:FF:001155">
    <property type="entry name" value="UTP13p Nucleolar protein"/>
    <property type="match status" value="1"/>
</dbReference>
<dbReference type="FunFam" id="2.130.10.10:FF:001389">
    <property type="entry name" value="UTP13p Nucleolar protein"/>
    <property type="match status" value="1"/>
</dbReference>
<dbReference type="Gene3D" id="2.130.10.10">
    <property type="entry name" value="YVTN repeat-like/Quinoprotein amine dehydrogenase"/>
    <property type="match status" value="4"/>
</dbReference>
<dbReference type="InterPro" id="IPR020472">
    <property type="entry name" value="G-protein_beta_WD-40_rep"/>
</dbReference>
<dbReference type="InterPro" id="IPR013934">
    <property type="entry name" value="Utp13_C"/>
</dbReference>
<dbReference type="InterPro" id="IPR015943">
    <property type="entry name" value="WD40/YVTN_repeat-like_dom_sf"/>
</dbReference>
<dbReference type="InterPro" id="IPR019775">
    <property type="entry name" value="WD40_repeat_CS"/>
</dbReference>
<dbReference type="InterPro" id="IPR036322">
    <property type="entry name" value="WD40_repeat_dom_sf"/>
</dbReference>
<dbReference type="InterPro" id="IPR001680">
    <property type="entry name" value="WD40_rpt"/>
</dbReference>
<dbReference type="PANTHER" id="PTHR19854">
    <property type="entry name" value="TRANSDUCIN BETA-LIKE 3"/>
    <property type="match status" value="1"/>
</dbReference>
<dbReference type="PANTHER" id="PTHR19854:SF15">
    <property type="entry name" value="TRANSDUCIN BETA-LIKE PROTEIN 3"/>
    <property type="match status" value="1"/>
</dbReference>
<dbReference type="Pfam" id="PF23769">
    <property type="entry name" value="Beta-prop_WDR75_2nd"/>
    <property type="match status" value="1"/>
</dbReference>
<dbReference type="Pfam" id="PF08625">
    <property type="entry name" value="Utp13"/>
    <property type="match status" value="1"/>
</dbReference>
<dbReference type="Pfam" id="PF00400">
    <property type="entry name" value="WD40"/>
    <property type="match status" value="4"/>
</dbReference>
<dbReference type="PRINTS" id="PR00320">
    <property type="entry name" value="GPROTEINBRPT"/>
</dbReference>
<dbReference type="SMART" id="SM00320">
    <property type="entry name" value="WD40"/>
    <property type="match status" value="11"/>
</dbReference>
<dbReference type="SUPFAM" id="SSF50978">
    <property type="entry name" value="WD40 repeat-like"/>
    <property type="match status" value="2"/>
</dbReference>
<dbReference type="PROSITE" id="PS00678">
    <property type="entry name" value="WD_REPEATS_1"/>
    <property type="match status" value="3"/>
</dbReference>
<dbReference type="PROSITE" id="PS50082">
    <property type="entry name" value="WD_REPEATS_2"/>
    <property type="match status" value="6"/>
</dbReference>
<dbReference type="PROSITE" id="PS50294">
    <property type="entry name" value="WD_REPEATS_REGION"/>
    <property type="match status" value="1"/>
</dbReference>
<proteinExistence type="evidence at protein level"/>
<feature type="chain" id="PRO_0000051320" description="U3 small nucleolar RNA-associated protein 13">
    <location>
        <begin position="1"/>
        <end position="817"/>
    </location>
</feature>
<feature type="repeat" description="WD 1">
    <location>
        <begin position="59"/>
        <end position="100"/>
    </location>
</feature>
<feature type="repeat" description="WD 2">
    <location>
        <begin position="102"/>
        <end position="139"/>
    </location>
</feature>
<feature type="repeat" description="WD 3">
    <location>
        <begin position="142"/>
        <end position="187"/>
    </location>
</feature>
<feature type="repeat" description="WD 4">
    <location>
        <begin position="191"/>
        <end position="233"/>
    </location>
</feature>
<feature type="repeat" description="WD 5">
    <location>
        <begin position="238"/>
        <end position="280"/>
    </location>
</feature>
<feature type="repeat" description="WD 6">
    <location>
        <begin position="386"/>
        <end position="425"/>
    </location>
</feature>
<feature type="repeat" description="WD 7">
    <location>
        <begin position="432"/>
        <end position="476"/>
    </location>
</feature>
<feature type="repeat" description="WD 8">
    <location>
        <begin position="489"/>
        <end position="528"/>
    </location>
</feature>
<feature type="repeat" description="WD 9">
    <location>
        <begin position="531"/>
        <end position="572"/>
    </location>
</feature>
<feature type="repeat" description="WD 10">
    <location>
        <begin position="573"/>
        <end position="614"/>
    </location>
</feature>
<feature type="repeat" description="WD 11">
    <location>
        <begin position="616"/>
        <end position="654"/>
    </location>
</feature>
<feature type="repeat" description="WD 12">
    <location>
        <begin position="664"/>
        <end position="705"/>
    </location>
</feature>
<protein>
    <recommendedName>
        <fullName>U3 small nucleolar RNA-associated protein 13</fullName>
        <shortName>U3 snoRNA-associated protein 13</shortName>
    </recommendedName>
    <alternativeName>
        <fullName>U three protein 13</fullName>
    </alternativeName>
</protein>